<name>CCSA_CHLVU</name>
<evidence type="ECO:0000255" key="1">
    <source>
        <dbReference type="HAMAP-Rule" id="MF_01391"/>
    </source>
</evidence>
<organism>
    <name type="scientific">Chlorella vulgaris</name>
    <name type="common">Green alga</name>
    <dbReference type="NCBI Taxonomy" id="3077"/>
    <lineage>
        <taxon>Eukaryota</taxon>
        <taxon>Viridiplantae</taxon>
        <taxon>Chlorophyta</taxon>
        <taxon>core chlorophytes</taxon>
        <taxon>Trebouxiophyceae</taxon>
        <taxon>Chlorellales</taxon>
        <taxon>Chlorellaceae</taxon>
        <taxon>Chlorella clade</taxon>
        <taxon>Chlorella</taxon>
    </lineage>
</organism>
<protein>
    <recommendedName>
        <fullName evidence="1">Cytochrome c biogenesis protein CcsA</fullName>
    </recommendedName>
</protein>
<geneLocation type="chloroplast"/>
<proteinExistence type="inferred from homology"/>
<reference key="1">
    <citation type="journal article" date="1997" name="Proc. Natl. Acad. Sci. U.S.A.">
        <title>Complete nucleotide sequence of the chloroplast genome from the green alga Chlorella vulgaris: the existence of genes possibly involved in chloroplast division.</title>
        <authorList>
            <person name="Wakasugi T."/>
            <person name="Nagai T."/>
            <person name="Kapoor M."/>
            <person name="Sugita M."/>
            <person name="Ito M."/>
            <person name="Ito S."/>
            <person name="Tsudzuki J."/>
            <person name="Nakashima K."/>
            <person name="Tsudzuki T."/>
            <person name="Suzuki Y."/>
            <person name="Hamada A."/>
            <person name="Ohta T."/>
            <person name="Inamura A."/>
            <person name="Yoshinaga K."/>
            <person name="Sugiura M."/>
        </authorList>
    </citation>
    <scope>NUCLEOTIDE SEQUENCE [LARGE SCALE GENOMIC DNA]</scope>
    <source>
        <strain>IAM C-27 / Tamiya</strain>
    </source>
</reference>
<accession>P56315</accession>
<comment type="function">
    <text evidence="1">Required during biogenesis of c-type cytochromes (cytochrome c6 and cytochrome f) at the step of heme attachment.</text>
</comment>
<comment type="subunit">
    <text evidence="1">May interact with Ccs1.</text>
</comment>
<comment type="subcellular location">
    <subcellularLocation>
        <location evidence="1">Plastid</location>
        <location evidence="1">Chloroplast thylakoid membrane</location>
        <topology evidence="1">Multi-pass membrane protein</topology>
    </subcellularLocation>
</comment>
<comment type="similarity">
    <text evidence="1">Belongs to the CcmF/CycK/Ccl1/NrfE/CcsA family.</text>
</comment>
<feature type="chain" id="PRO_0000201599" description="Cytochrome c biogenesis protein CcsA">
    <location>
        <begin position="1"/>
        <end position="315"/>
    </location>
</feature>
<feature type="transmembrane region" description="Helical" evidence="1">
    <location>
        <begin position="15"/>
        <end position="35"/>
    </location>
</feature>
<feature type="transmembrane region" description="Helical" evidence="1">
    <location>
        <begin position="39"/>
        <end position="59"/>
    </location>
</feature>
<feature type="transmembrane region" description="Helical" evidence="1">
    <location>
        <begin position="73"/>
        <end position="93"/>
    </location>
</feature>
<feature type="transmembrane region" description="Helical" evidence="1">
    <location>
        <begin position="97"/>
        <end position="117"/>
    </location>
</feature>
<feature type="transmembrane region" description="Helical" evidence="1">
    <location>
        <begin position="144"/>
        <end position="164"/>
    </location>
</feature>
<feature type="transmembrane region" description="Helical" evidence="1">
    <location>
        <begin position="222"/>
        <end position="242"/>
    </location>
</feature>
<feature type="transmembrane region" description="Helical" evidence="1">
    <location>
        <begin position="257"/>
        <end position="277"/>
    </location>
</feature>
<feature type="transmembrane region" description="Helical" evidence="1">
    <location>
        <begin position="283"/>
        <end position="303"/>
    </location>
</feature>
<sequence>MMVNIPVIENFLSNSCFLILFLTTVYYWLKIGFGGKSSFSFTGLTGYGSALCCLTLQLILRWVDSGHFPLSNLYESLIFLAWCLLLLYIYIEVSTKTLFLGVLTSPAILCLVAFTDFSLPTELQQSTPLVPALQSNWLVMHVTVMIASYAALLLGCFIAIAYLVLSKFFIKTTFVTAPLSSQNTVLRQESFLEEKQKTDIVFEKNDKNLKFLFFLDNLSYRTIGIGFCFLTLGILSGAIWANETWGNYWSWDPKETWAFITWLTFACYLHSRLVGGWTGSKPALVASFGFLVVWVCYLGVNLLGQGLHSYGFLNV</sequence>
<keyword id="KW-0150">Chloroplast</keyword>
<keyword id="KW-0201">Cytochrome c-type biogenesis</keyword>
<keyword id="KW-0472">Membrane</keyword>
<keyword id="KW-0934">Plastid</keyword>
<keyword id="KW-0793">Thylakoid</keyword>
<keyword id="KW-0812">Transmembrane</keyword>
<keyword id="KW-1133">Transmembrane helix</keyword>
<gene>
    <name evidence="1" type="primary">ccsA</name>
</gene>
<dbReference type="EMBL" id="AB001684">
    <property type="protein sequence ID" value="BAA57962.1"/>
    <property type="molecule type" value="Genomic_DNA"/>
</dbReference>
<dbReference type="PIR" id="T07314">
    <property type="entry name" value="T07314"/>
</dbReference>
<dbReference type="RefSeq" id="NP_045886.1">
    <property type="nucleotide sequence ID" value="NC_001865.1"/>
</dbReference>
<dbReference type="SMR" id="P56315"/>
<dbReference type="GeneID" id="809174"/>
<dbReference type="GO" id="GO:0009535">
    <property type="term" value="C:chloroplast thylakoid membrane"/>
    <property type="evidence" value="ECO:0007669"/>
    <property type="project" value="UniProtKB-SubCell"/>
</dbReference>
<dbReference type="GO" id="GO:0005886">
    <property type="term" value="C:plasma membrane"/>
    <property type="evidence" value="ECO:0007669"/>
    <property type="project" value="TreeGrafter"/>
</dbReference>
<dbReference type="GO" id="GO:0020037">
    <property type="term" value="F:heme binding"/>
    <property type="evidence" value="ECO:0007669"/>
    <property type="project" value="InterPro"/>
</dbReference>
<dbReference type="GO" id="GO:0017004">
    <property type="term" value="P:cytochrome complex assembly"/>
    <property type="evidence" value="ECO:0007669"/>
    <property type="project" value="UniProtKB-UniRule"/>
</dbReference>
<dbReference type="HAMAP" id="MF_01391">
    <property type="entry name" value="CytC_CcsA"/>
    <property type="match status" value="1"/>
</dbReference>
<dbReference type="InterPro" id="IPR002541">
    <property type="entry name" value="Cyt_c_assembly"/>
</dbReference>
<dbReference type="InterPro" id="IPR017562">
    <property type="entry name" value="Cyt_c_biogenesis_CcsA"/>
</dbReference>
<dbReference type="InterPro" id="IPR045062">
    <property type="entry name" value="Cyt_c_biogenesis_CcsA/CcmC"/>
</dbReference>
<dbReference type="NCBIfam" id="TIGR03144">
    <property type="entry name" value="cytochr_II_ccsB"/>
    <property type="match status" value="1"/>
</dbReference>
<dbReference type="PANTHER" id="PTHR30071:SF1">
    <property type="entry name" value="CYTOCHROME B_B6 PROTEIN-RELATED"/>
    <property type="match status" value="1"/>
</dbReference>
<dbReference type="PANTHER" id="PTHR30071">
    <property type="entry name" value="HEME EXPORTER PROTEIN C"/>
    <property type="match status" value="1"/>
</dbReference>
<dbReference type="Pfam" id="PF01578">
    <property type="entry name" value="Cytochrom_C_asm"/>
    <property type="match status" value="1"/>
</dbReference>